<protein>
    <recommendedName>
        <fullName>Fructose dehydrogenase cytochrome subunit</fullName>
    </recommendedName>
    <alternativeName>
        <fullName>Fructose dehydrogenase subunit II</fullName>
    </alternativeName>
</protein>
<reference key="1">
    <citation type="journal article" date="2013" name="Appl. Environ. Microbiol.">
        <title>Heterologous overexpression and characterization of a flavoprotein-cytochrome c complex fructose dehydrogenase of Gluconobacter japonicus NBRC3260.</title>
        <authorList>
            <person name="Kawai S."/>
            <person name="Goda-Tsutsumi M."/>
            <person name="Yakushi T."/>
            <person name="Kano K."/>
            <person name="Matsushita K."/>
        </authorList>
    </citation>
    <scope>NUCLEOTIDE SEQUENCE [GENOMIC DNA]</scope>
    <scope>FUNCTION</scope>
    <scope>BIOTECHNOLOGY</scope>
    <scope>SUBUNIT</scope>
    <scope>SUBCELLULAR LOCATION</scope>
    <source>
        <strain>ATCC 12302 / IAM 1816 / JCM 20278 / NBRC 3260</strain>
    </source>
</reference>
<reference key="2">
    <citation type="journal article" date="1981" name="J. Bacteriol.">
        <title>D-fructose dehydrogenase of Gluconobacter industrius: purification, characterization, and application to enzymatic microdetermination of D-fructose.</title>
        <authorList>
            <person name="Ameyama M."/>
            <person name="Shinagawa E."/>
            <person name="Matsushita K."/>
            <person name="Adachi O."/>
        </authorList>
    </citation>
    <scope>SUBUNIT</scope>
    <scope>SUBCELLULAR LOCATION</scope>
    <source>
        <strain>ATCC 12302 / IAM 1816 / JCM 20278 / NBRC 3260</strain>
    </source>
</reference>
<name>FDHC_GLUJA</name>
<dbReference type="EMBL" id="AB728565">
    <property type="protein sequence ID" value="BAM93251.1"/>
    <property type="molecule type" value="Genomic_DNA"/>
</dbReference>
<dbReference type="PDB" id="7W2J">
    <property type="method" value="EM"/>
    <property type="resolution" value="3.60 A"/>
    <property type="chains" value="C/F=1-486"/>
</dbReference>
<dbReference type="PDB" id="7WSQ">
    <property type="method" value="EM"/>
    <property type="resolution" value="3.80 A"/>
    <property type="chains" value="C/F=1-486"/>
</dbReference>
<dbReference type="PDB" id="8JEJ">
    <property type="method" value="EM"/>
    <property type="resolution" value="2.50 A"/>
    <property type="chains" value="C=1-486"/>
</dbReference>
<dbReference type="PDB" id="8JEK">
    <property type="method" value="EM"/>
    <property type="resolution" value="2.70 A"/>
    <property type="chains" value="C=1-486"/>
</dbReference>
<dbReference type="PDB" id="8K6J">
    <property type="method" value="EM"/>
    <property type="resolution" value="2.77 A"/>
    <property type="chains" value="C=1-486"/>
</dbReference>
<dbReference type="PDB" id="8K6K">
    <property type="method" value="EM"/>
    <property type="resolution" value="2.40 A"/>
    <property type="chains" value="C=1-486"/>
</dbReference>
<dbReference type="PDB" id="8XCM">
    <property type="method" value="EM"/>
    <property type="resolution" value="3.08 A"/>
    <property type="chains" value="C=1-486"/>
</dbReference>
<dbReference type="PDB" id="8XCN">
    <property type="method" value="EM"/>
    <property type="resolution" value="3.02 A"/>
    <property type="chains" value="C=1-486"/>
</dbReference>
<dbReference type="PDBsum" id="7W2J"/>
<dbReference type="PDBsum" id="7WSQ"/>
<dbReference type="PDBsum" id="8JEJ"/>
<dbReference type="PDBsum" id="8JEK"/>
<dbReference type="PDBsum" id="8K6J"/>
<dbReference type="PDBsum" id="8K6K"/>
<dbReference type="PDBsum" id="8XCM"/>
<dbReference type="PDBsum" id="8XCN"/>
<dbReference type="EMDB" id="EMD-32262"/>
<dbReference type="EMDB" id="EMD-32764"/>
<dbReference type="EMDB" id="EMD-36190"/>
<dbReference type="EMDB" id="EMD-36191"/>
<dbReference type="EMDB" id="EMD-36920"/>
<dbReference type="EMDB" id="EMD-36921"/>
<dbReference type="EMDB" id="EMD-38247"/>
<dbReference type="EMDB" id="EMD-38248"/>
<dbReference type="SMR" id="M1V1V5"/>
<dbReference type="KEGG" id="ag:BAM93251"/>
<dbReference type="BioCyc" id="MetaCyc:MONOMER-21744"/>
<dbReference type="GO" id="GO:0005886">
    <property type="term" value="C:plasma membrane"/>
    <property type="evidence" value="ECO:0007669"/>
    <property type="project" value="UniProtKB-SubCell"/>
</dbReference>
<dbReference type="GO" id="GO:0009055">
    <property type="term" value="F:electron transfer activity"/>
    <property type="evidence" value="ECO:0007669"/>
    <property type="project" value="InterPro"/>
</dbReference>
<dbReference type="GO" id="GO:0020037">
    <property type="term" value="F:heme binding"/>
    <property type="evidence" value="ECO:0007669"/>
    <property type="project" value="InterPro"/>
</dbReference>
<dbReference type="GO" id="GO:0005506">
    <property type="term" value="F:iron ion binding"/>
    <property type="evidence" value="ECO:0007669"/>
    <property type="project" value="InterPro"/>
</dbReference>
<dbReference type="GO" id="GO:0016614">
    <property type="term" value="F:oxidoreductase activity, acting on CH-OH group of donors"/>
    <property type="evidence" value="ECO:0007669"/>
    <property type="project" value="InterPro"/>
</dbReference>
<dbReference type="GO" id="GO:0006000">
    <property type="term" value="P:fructose metabolic process"/>
    <property type="evidence" value="ECO:0000314"/>
    <property type="project" value="UniProtKB"/>
</dbReference>
<dbReference type="FunFam" id="1.10.760.10:FF:000091">
    <property type="entry name" value="Fructose dehydrogenase cytochrome subunit"/>
    <property type="match status" value="1"/>
</dbReference>
<dbReference type="FunFam" id="1.10.760.10:FF:000040">
    <property type="entry name" value="Probable cytochrome c"/>
    <property type="match status" value="1"/>
</dbReference>
<dbReference type="Gene3D" id="1.10.760.10">
    <property type="entry name" value="Cytochrome c-like domain"/>
    <property type="match status" value="3"/>
</dbReference>
<dbReference type="InterPro" id="IPR009056">
    <property type="entry name" value="Cyt_c-like_dom"/>
</dbReference>
<dbReference type="InterPro" id="IPR036909">
    <property type="entry name" value="Cyt_c-like_dom_sf"/>
</dbReference>
<dbReference type="InterPro" id="IPR051459">
    <property type="entry name" value="Cytochrome_c-type_DH"/>
</dbReference>
<dbReference type="InterPro" id="IPR014353">
    <property type="entry name" value="Membr-bd_ADH_cyt_c"/>
</dbReference>
<dbReference type="PANTHER" id="PTHR35008:SF8">
    <property type="entry name" value="ALCOHOL DEHYDROGENASE CYTOCHROME C SUBUNIT"/>
    <property type="match status" value="1"/>
</dbReference>
<dbReference type="PANTHER" id="PTHR35008">
    <property type="entry name" value="BLL4482 PROTEIN-RELATED"/>
    <property type="match status" value="1"/>
</dbReference>
<dbReference type="Pfam" id="PF00034">
    <property type="entry name" value="Cytochrom_C"/>
    <property type="match status" value="2"/>
</dbReference>
<dbReference type="Pfam" id="PF13442">
    <property type="entry name" value="Cytochrome_CBB3"/>
    <property type="match status" value="1"/>
</dbReference>
<dbReference type="PIRSF" id="PIRSF000018">
    <property type="entry name" value="Mb_ADH_cyt_c"/>
    <property type="match status" value="1"/>
</dbReference>
<dbReference type="SUPFAM" id="SSF46626">
    <property type="entry name" value="Cytochrome c"/>
    <property type="match status" value="3"/>
</dbReference>
<dbReference type="PROSITE" id="PS51007">
    <property type="entry name" value="CYTC"/>
    <property type="match status" value="3"/>
</dbReference>
<keyword id="KW-0002">3D-structure</keyword>
<keyword id="KW-1003">Cell membrane</keyword>
<keyword id="KW-0349">Heme</keyword>
<keyword id="KW-0408">Iron</keyword>
<keyword id="KW-0472">Membrane</keyword>
<keyword id="KW-0479">Metal-binding</keyword>
<keyword id="KW-0677">Repeat</keyword>
<keyword id="KW-0732">Signal</keyword>
<keyword id="KW-0812">Transmembrane</keyword>
<keyword id="KW-1133">Transmembrane helix</keyword>
<evidence type="ECO:0000255" key="1"/>
<evidence type="ECO:0000255" key="2">
    <source>
        <dbReference type="PROSITE-ProRule" id="PRU00433"/>
    </source>
</evidence>
<evidence type="ECO:0000269" key="3">
    <source>
    </source>
</evidence>
<evidence type="ECO:0000269" key="4">
    <source>
    </source>
</evidence>
<evidence type="ECO:0000305" key="5"/>
<proteinExistence type="evidence at protein level"/>
<accession>M1V1V5</accession>
<comment type="function">
    <text evidence="3">Cytochrome subunit of fructose dehydrogenase, an enzyme that catalyzes the oxidation of D-fructose to produce 5-keto-D-fructose. In the complex, mediates both the electron transfer to ubiquinone and the anchoring of the complex to the membrane.</text>
</comment>
<comment type="subunit">
    <text evidence="3 4">Heterotrimer composed of FdhL, FdhS and FdhC.</text>
</comment>
<comment type="subcellular location">
    <subcellularLocation>
        <location evidence="5">Cell membrane</location>
        <topology evidence="5">Single-pass type I membrane protein</topology>
    </subcellularLocation>
</comment>
<comment type="PTM">
    <text evidence="5">Binds 3 heme c groups covalently per subunit.</text>
</comment>
<comment type="biotechnology">
    <text evidence="3">This enzyme is commonly used in a number of research projects to examine the electrochemical properties of enzyme-catalyzed electrode reactions, named bioelectrocatalysis. Available as a commercial product from Sigma Aldrich (catalog number F4892).</text>
</comment>
<feature type="signal peptide" evidence="1">
    <location>
        <begin position="1"/>
        <end position="25"/>
    </location>
</feature>
<feature type="chain" id="PRO_0000425561" description="Fructose dehydrogenase cytochrome subunit">
    <location>
        <begin position="26"/>
        <end position="486"/>
    </location>
</feature>
<feature type="transmembrane region" description="Helical" evidence="1">
    <location>
        <begin position="458"/>
        <end position="478"/>
    </location>
</feature>
<feature type="domain" description="Cytochrome c 1" evidence="2">
    <location>
        <begin position="38"/>
        <end position="142"/>
    </location>
</feature>
<feature type="domain" description="Cytochrome c 2" evidence="2">
    <location>
        <begin position="186"/>
        <end position="294"/>
    </location>
</feature>
<feature type="domain" description="Cytochrome c 3" evidence="2">
    <location>
        <begin position="330"/>
        <end position="423"/>
    </location>
</feature>
<feature type="binding site" description="covalent" evidence="2">
    <location>
        <position position="52"/>
    </location>
    <ligand>
        <name>heme c</name>
        <dbReference type="ChEBI" id="CHEBI:61717"/>
        <label>1</label>
    </ligand>
</feature>
<feature type="binding site" description="covalent" evidence="2">
    <location>
        <position position="55"/>
    </location>
    <ligand>
        <name>heme c</name>
        <dbReference type="ChEBI" id="CHEBI:61717"/>
        <label>1</label>
    </ligand>
</feature>
<feature type="binding site" description="axial binding residue" evidence="2">
    <location>
        <position position="56"/>
    </location>
    <ligand>
        <name>heme c</name>
        <dbReference type="ChEBI" id="CHEBI:61717"/>
        <label>1</label>
    </ligand>
    <ligandPart>
        <name>Fe</name>
        <dbReference type="ChEBI" id="CHEBI:18248"/>
    </ligandPart>
</feature>
<feature type="binding site" description="covalent" evidence="2">
    <location>
        <position position="201"/>
    </location>
    <ligand>
        <name>heme c</name>
        <dbReference type="ChEBI" id="CHEBI:61717"/>
        <label>2</label>
    </ligand>
</feature>
<feature type="binding site" description="covalent" evidence="2">
    <location>
        <position position="204"/>
    </location>
    <ligand>
        <name>heme c</name>
        <dbReference type="ChEBI" id="CHEBI:61717"/>
        <label>2</label>
    </ligand>
</feature>
<feature type="binding site" description="axial binding residue" evidence="2">
    <location>
        <position position="205"/>
    </location>
    <ligand>
        <name>heme c</name>
        <dbReference type="ChEBI" id="CHEBI:61717"/>
        <label>2</label>
    </ligand>
    <ligandPart>
        <name>Fe</name>
        <dbReference type="ChEBI" id="CHEBI:18248"/>
    </ligandPart>
</feature>
<feature type="binding site" description="covalent" evidence="2">
    <location>
        <position position="343"/>
    </location>
    <ligand>
        <name>heme c</name>
        <dbReference type="ChEBI" id="CHEBI:61717"/>
        <label>3</label>
    </ligand>
</feature>
<feature type="binding site" description="covalent" evidence="2">
    <location>
        <position position="346"/>
    </location>
    <ligand>
        <name>heme c</name>
        <dbReference type="ChEBI" id="CHEBI:61717"/>
        <label>3</label>
    </ligand>
</feature>
<feature type="binding site" description="axial binding residue" evidence="2">
    <location>
        <position position="347"/>
    </location>
    <ligand>
        <name>heme c</name>
        <dbReference type="ChEBI" id="CHEBI:61717"/>
        <label>3</label>
    </ligand>
    <ligandPart>
        <name>Fe</name>
        <dbReference type="ChEBI" id="CHEBI:18248"/>
    </ligandPart>
</feature>
<organism>
    <name type="scientific">Gluconobacter japonicus</name>
    <dbReference type="NCBI Taxonomy" id="376620"/>
    <lineage>
        <taxon>Bacteria</taxon>
        <taxon>Pseudomonadati</taxon>
        <taxon>Pseudomonadota</taxon>
        <taxon>Alphaproteobacteria</taxon>
        <taxon>Acetobacterales</taxon>
        <taxon>Acetobacteraceae</taxon>
        <taxon>Gluconobacter</taxon>
    </lineage>
</organism>
<gene>
    <name type="primary">fdhC</name>
</gene>
<sequence>MRYFRPLSATAMTTVLLLAGTNVRAQPTEPTPASAHRPSISRGHYLAIAADCAACHTNGRDGQFLAGGYAISSPMGNIYSTNITPSKTHGIGNYTLEQFSKALRHGIRADGAQLYPAMPYDAYNRLTDEDVKSLYAYIMTEVKPVDAPSPKTQLPFPFSIRASLGIWKIAARIEGKPYVFDHTHNDDWNRGRYLVDELAHCGECHTPRNFLLAPNQSAYLAGADIGSWRAPNITNAPQSGIGSWSDQDLFQYLKTGKTAHARAAGPMAEAIEHSLQYLPDADISAIVTYLRSVPAKAESGQTVANFEHAGRPSSYSVANANSRRSNSTLTKTTDGAALYEAVCASCHQSDGKGSKDGYYPSLVGNTTTGQLNPNDLIASILYGVDRTTDNHEILMPAFGPDSLVQPLTDEQIATIADYVLSHFGNAQATVSADAVKQVRAGGKQVPLAKLASPGVMLLLGTGGILGAILVVAGLWWLISRRKKRSA</sequence>